<accession>Q3LZX1</accession>
<gene>
    <name evidence="1" type="primary">S</name>
    <name type="ORF">2</name>
</gene>
<proteinExistence type="inferred from homology"/>
<feature type="signal peptide" evidence="1">
    <location>
        <begin position="1"/>
        <end position="13"/>
    </location>
</feature>
<feature type="chain" id="PRO_0000291365" description="Spike glycoprotein">
    <location>
        <begin position="14"/>
        <end position="1242"/>
    </location>
</feature>
<feature type="chain" id="PRO_0000444059" description="Spike protein S1" evidence="1">
    <location>
        <begin position="14"/>
        <end position="654"/>
    </location>
</feature>
<feature type="chain" id="PRO_0000291367" description="Spike protein S2" evidence="1">
    <location>
        <begin position="655"/>
        <end position="1242"/>
    </location>
</feature>
<feature type="chain" id="PRO_0000444060" description="Spike protein S2'" evidence="1">
    <location>
        <begin position="785"/>
        <end position="1242"/>
    </location>
</feature>
<feature type="topological domain" description="Extracellular" evidence="1">
    <location>
        <begin position="14"/>
        <end position="1182"/>
    </location>
</feature>
<feature type="transmembrane region" description="Helical" evidence="1">
    <location>
        <begin position="1183"/>
        <end position="1203"/>
    </location>
</feature>
<feature type="topological domain" description="Cytoplasmic" evidence="1">
    <location>
        <begin position="1204"/>
        <end position="1242"/>
    </location>
</feature>
<feature type="domain" description="BetaCoV S1-NTD" evidence="3">
    <location>
        <begin position="14"/>
        <end position="294"/>
    </location>
</feature>
<feature type="domain" description="BetaCoV S1-CTD" evidence="2">
    <location>
        <begin position="325"/>
        <end position="500"/>
    </location>
</feature>
<feature type="region of interest" description="Fusion peptide 1" evidence="1">
    <location>
        <begin position="785"/>
        <end position="806"/>
    </location>
</feature>
<feature type="region of interest" description="Fusion peptide 2" evidence="1">
    <location>
        <begin position="804"/>
        <end position="824"/>
    </location>
</feature>
<feature type="region of interest" description="Heptad repeat 1" evidence="1">
    <location>
        <begin position="889"/>
        <end position="939"/>
    </location>
</feature>
<feature type="region of interest" description="Heptad repeat 2" evidence="1">
    <location>
        <begin position="1132"/>
        <end position="1171"/>
    </location>
</feature>
<feature type="coiled-coil region" evidence="1">
    <location>
        <begin position="918"/>
        <end position="962"/>
    </location>
</feature>
<feature type="coiled-coil region" evidence="1">
    <location>
        <begin position="1144"/>
        <end position="1172"/>
    </location>
</feature>
<feature type="short sequence motif" description="KxHxx" evidence="1">
    <location>
        <begin position="1238"/>
        <end position="1242"/>
    </location>
</feature>
<feature type="site" description="Cleavage" evidence="1">
    <location>
        <begin position="654"/>
        <end position="655"/>
    </location>
</feature>
<feature type="site" description="Cleavage" evidence="1">
    <location>
        <begin position="784"/>
        <end position="785"/>
    </location>
</feature>
<feature type="glycosylation site" description="N-linked (GlcNAc...) asparagine; by host" evidence="1">
    <location>
        <position position="65"/>
    </location>
</feature>
<feature type="glycosylation site" description="N-linked (GlcNAc...) asparagine; by host" evidence="1">
    <location>
        <position position="115"/>
    </location>
</feature>
<feature type="glycosylation site" description="N-linked (GlcNAc...) asparagine; by host" evidence="1">
    <location>
        <position position="124"/>
    </location>
</feature>
<feature type="glycosylation site" description="N-linked (GlcNAc...) asparagine; by host" evidence="1">
    <location>
        <position position="125"/>
    </location>
</feature>
<feature type="glycosylation site" description="N-linked (GlcNAc...) asparagine; by host" evidence="1">
    <location>
        <position position="162"/>
    </location>
</feature>
<feature type="glycosylation site" description="N-linked (GlcNAc...) asparagine; by host" evidence="1">
    <location>
        <position position="231"/>
    </location>
</feature>
<feature type="glycosylation site" description="N-linked (GlcNAc...) asparagine; by host" evidence="1">
    <location>
        <position position="273"/>
    </location>
</feature>
<feature type="glycosylation site" description="N-linked (GlcNAc...) asparagine; by host" evidence="1">
    <location>
        <position position="322"/>
    </location>
</feature>
<feature type="glycosylation site" description="N-linked (GlcNAc...) asparagine; by host" evidence="1">
    <location>
        <position position="334"/>
    </location>
</feature>
<feature type="glycosylation site" description="N-linked (GlcNAc...) asparagine; by host" evidence="1">
    <location>
        <position position="361"/>
    </location>
</feature>
<feature type="glycosylation site" description="N-linked (GlcNAc...) asparagine; by host" evidence="1">
    <location>
        <position position="576"/>
    </location>
</feature>
<feature type="glycosylation site" description="N-linked (GlcNAc...) asparagine; by host" evidence="1">
    <location>
        <position position="589"/>
    </location>
</feature>
<feature type="glycosylation site" description="N-linked (GlcNAc...) asparagine; by host" evidence="1">
    <location>
        <position position="630"/>
    </location>
</feature>
<feature type="glycosylation site" description="N-linked (GlcNAc...) asparagine; by host" evidence="1">
    <location>
        <position position="678"/>
    </location>
</feature>
<feature type="glycosylation site" description="N-linked (GlcNAc...) asparagine; by host" evidence="1">
    <location>
        <position position="686"/>
    </location>
</feature>
<feature type="glycosylation site" description="N-linked (GlcNAc...) asparagine; by host" evidence="1">
    <location>
        <position position="770"/>
    </location>
</feature>
<feature type="glycosylation site" description="N-linked (GlcNAc...) asparagine; by host" evidence="1">
    <location>
        <position position="1043"/>
    </location>
</feature>
<feature type="glycosylation site" description="N-linked (GlcNAc...) asparagine; by host" evidence="1">
    <location>
        <position position="1067"/>
    </location>
</feature>
<feature type="glycosylation site" description="N-linked (GlcNAc...) asparagine; by host" evidence="1">
    <location>
        <position position="1103"/>
    </location>
</feature>
<feature type="glycosylation site" description="N-linked (GlcNAc...) asparagine; by host" evidence="1">
    <location>
        <position position="1127"/>
    </location>
</feature>
<feature type="glycosylation site" description="N-linked (GlcNAc...) asparagine; by host" evidence="1">
    <location>
        <position position="1142"/>
    </location>
</feature>
<feature type="glycosylation site" description="N-linked (GlcNAc...) asparagine; by host" evidence="1">
    <location>
        <position position="1163"/>
    </location>
</feature>
<feature type="disulfide bond" evidence="3">
    <location>
        <begin position="19"/>
        <end position="139"/>
    </location>
</feature>
<feature type="disulfide bond" evidence="3">
    <location>
        <begin position="134"/>
        <end position="163"/>
    </location>
</feature>
<feature type="disulfide bond" evidence="3">
    <location>
        <begin position="282"/>
        <end position="292"/>
    </location>
</feature>
<feature type="disulfide bond" evidence="2">
    <location>
        <begin position="327"/>
        <end position="352"/>
    </location>
</feature>
<feature type="disulfide bond" evidence="2">
    <location>
        <begin position="370"/>
        <end position="423"/>
    </location>
</feature>
<feature type="disulfide bond" evidence="2">
    <location>
        <begin position="382"/>
        <end position="498"/>
    </location>
</feature>
<feature type="disulfide bond" evidence="1">
    <location>
        <begin position="809"/>
        <end position="820"/>
    </location>
</feature>
<organism>
    <name type="scientific">Bat coronavirus HKU3</name>
    <name type="common">BtCoV</name>
    <name type="synonym">SARS-like coronavirus HKU3</name>
    <dbReference type="NCBI Taxonomy" id="442736"/>
    <lineage>
        <taxon>Viruses</taxon>
        <taxon>Riboviria</taxon>
        <taxon>Orthornavirae</taxon>
        <taxon>Pisuviricota</taxon>
        <taxon>Pisoniviricetes</taxon>
        <taxon>Nidovirales</taxon>
        <taxon>Cornidovirineae</taxon>
        <taxon>Coronaviridae</taxon>
        <taxon>Orthocoronavirinae</taxon>
        <taxon>Betacoronavirus</taxon>
        <taxon>Sarbecovirus</taxon>
        <taxon>Severe acute respiratory syndrome coronavirus</taxon>
    </lineage>
</organism>
<sequence length="1242" mass="137570">MKILIFAFLANLAKAQEGCGIISRKPQPKMAQVSSSRRGVYYNDDIFRSDVLHLTQDYFLPFDSNLTQYFSLNVDSDRYTYFDNPILDFGDGVYFAATEKSNVIRGWIFGSSFDNTTQSAVIVNNSTHIIIRVCNFNLCKEPMYTVSRGTQQNAWVYQSAFNCTYDRVEKSFQLDTTPKTGNFKDLREYVFKNRDGFLSVYQTYTAVNLPRGLPTGFSVLKPILKLPFGINITSYRVVMAMFSQTTSNFLPESAAYYVGNLKYSTFMLRFNENGTITDAVDCSQNPLAELKCTIKNFNVDKGIYQTSNFRVSPTQEVIRFPNITNRCPFDKVFNATRFPNVYAWERTKISDCVADYTVLYNSTSFSTFKCYGVSPSKLIDLCFTSVYADTFLIRSSEVRQVAPGETGVIADYNYKLPDDFTGCVIAWNTAKHDTGNYYYRSHRKTKLKPFERDLSSDDGNGVYTLSTYDFNPNVPVAYQATRVVVLSFELLNAPATVCGPKLSTELVKNQCVNFNFNGLKGTGVLTSSSKRFQSFQQFGRDTSDFTDSVRDPQTLEILDISPCSFGGVSVITPGTNASSEVAVLYQDVNCTDVPTAIRADQLTPAWRVYSTGVNVFQTQAGCLIGAEHVNASYECDIPIGAGICASYHTASVLRSTGQKSIVAYTMSLGAENSIAYANNSIAIPTNFSISVTTEVMPVSMAKTAVDCTMYICGDSLECSNLLLQYGSFCTQLNRALTGIAIEQDKNTQEVFAQVKQMYKTPAIKDFGGFNFSQILPDPSKPTKRSFIEDLLFNKVTLADAGFMKQYGDCLGDVSARDLICAQKFNGLTVLPPLLTDEMVAAYTAALVSGTATAGWTFGAGAALQIPFAMQMAYRFNGIGVTQNVLYENQKLIANQFNSAIGKIQESLSSTASALGKLQDVVNQNAQALNTLVKQLSSNFGAISSVLNDILSRLDKVEAEVQIDRLITGRLQSLQTYVTQQLIRAAEIRASANLAATKMSECVLGQSKRVDFCGKGYHLMSFPQSAPHGVVFLHVTYVPSQEKNFTTAPAICHEGKAYFPREGVFVSNGTSWFITQRNFYSPQLITTDNTFVSGNCDVVIGIINNTVYDPLQPELDSFKEELDKYFKNHTSPDVDLGDISGINASVVNIQKEIDRLNEVAKNLNESLIDLQELGKYEQYIKWPWYVWLGFIAGLIAIVMVTILLCCMTSCCSCLKGACSCGSCCKFDEDDSEPVLKGVKLHYT</sequence>
<reference key="1">
    <citation type="journal article" date="2005" name="Proc. Natl. Acad. Sci. U.S.A.">
        <title>Severe acute respiratory syndrome coronavirus-like virus in Chinese horseshoe bats.</title>
        <authorList>
            <person name="Lau S.K.P."/>
            <person name="Woo P.C.Y."/>
            <person name="Li K.S.M."/>
            <person name="Huang Y."/>
            <person name="Tsoi H.-W."/>
            <person name="Wong B.H.L."/>
            <person name="Wong S.S.Y."/>
            <person name="Leung S.-Y."/>
            <person name="Chan K.-H."/>
            <person name="Yuen K.-Y."/>
        </authorList>
    </citation>
    <scope>NUCLEOTIDE SEQUENCE [GENOMIC RNA]</scope>
    <source>
        <strain>Isolate HKU3-1</strain>
    </source>
</reference>
<evidence type="ECO:0000255" key="1">
    <source>
        <dbReference type="HAMAP-Rule" id="MF_04099"/>
    </source>
</evidence>
<evidence type="ECO:0000255" key="2">
    <source>
        <dbReference type="PROSITE-ProRule" id="PRU01269"/>
    </source>
</evidence>
<evidence type="ECO:0000255" key="3">
    <source>
        <dbReference type="PROSITE-ProRule" id="PRU01270"/>
    </source>
</evidence>
<comment type="function">
    <molecule>Spike protein S1</molecule>
    <text evidence="1">Attaches the virion to the cell membrane by interacting with host receptor, initiating the infection.</text>
</comment>
<comment type="function">
    <molecule>Spike protein S2</molecule>
    <text evidence="1">Mediates fusion of the virion and cellular membranes by acting as a class I viral fusion protein. Under the current model, the protein has at least three conformational states: pre-fusion native state, pre-hairpin intermediate state, and post-fusion hairpin state. During viral and target cell membrane fusion, the coiled coil regions (heptad repeats) assume a trimer-of-hairpins structure, positioning the fusion peptide in close proximity to the C-terminal region of the ectodomain. The formation of this structure appears to drive apposition and subsequent fusion of viral and target cell membranes.</text>
</comment>
<comment type="function">
    <molecule>Spike protein S2'</molecule>
    <text evidence="1">Acts as a viral fusion peptide which is unmasked following S2 cleavage occurring upon virus endocytosis.</text>
</comment>
<comment type="subunit">
    <text evidence="1">Homotrimer; each monomer consists of a S1 and a S2 subunit. The resulting peplomers protrude from the virus surface as spikes.</text>
</comment>
<comment type="subcellular location">
    <subcellularLocation>
        <location evidence="1">Virion membrane</location>
        <topology evidence="1">Single-pass type I membrane protein</topology>
    </subcellularLocation>
    <subcellularLocation>
        <location evidence="1">Host endoplasmic reticulum-Golgi intermediate compartment membrane</location>
        <topology evidence="1">Single-pass type I membrane protein</topology>
    </subcellularLocation>
    <subcellularLocation>
        <location evidence="1">Host cell membrane</location>
        <topology evidence="1">Single-pass type I membrane protein</topology>
    </subcellularLocation>
    <text evidence="1">Accumulates in the endoplasmic reticulum-Golgi intermediate compartment, where it participates in virus particle assembly. Some S oligomers are transported to the host plasma membrane, where they may mediate cell-cell fusion.</text>
</comment>
<comment type="domain">
    <text evidence="1">Fusion peptide 1 (FP1) and fusion peptide 2 (FP2) function cooperatively and have a membrane-ordering effect on lipid headgroups and shallow hydrophobic regions of target bilayers. They are considered as two domains of an extended, bipartite FP. The membrane-ordering activity is calcium-dependent and also dependent on correct folding, which is maintained by an internal disulfide bond in FP2.</text>
</comment>
<comment type="PTM">
    <text evidence="1">Specific enzymatic cleavages in vivo yield mature proteins. The precursor is processed into S1 and S2 by host cell furin or another cellular protease to yield the mature S1 and S2 proteins. Additionally, a second cleavage leads to the release of a fusion peptide after viral attachment to host cell receptor.</text>
</comment>
<comment type="PTM">
    <text evidence="1">The cytoplasmic Cys-rich domain is palmitoylated. Spike glycoprotein is digested within host endosomes.</text>
</comment>
<comment type="miscellaneous">
    <text>Bat coronavirus HKU3 is highly similar to SARS-CoV (SARS-like).</text>
</comment>
<comment type="similarity">
    <text evidence="1">Belongs to the betacoronaviruses spike protein family.</text>
</comment>
<organismHost>
    <name type="scientific">Rhinolophus sinicus</name>
    <name type="common">Chinese rufous horseshoe bat</name>
    <dbReference type="NCBI Taxonomy" id="89399"/>
</organismHost>
<keyword id="KW-0175">Coiled coil</keyword>
<keyword id="KW-1015">Disulfide bond</keyword>
<keyword id="KW-1170">Fusion of virus membrane with host endosomal membrane</keyword>
<keyword id="KW-1168">Fusion of virus membrane with host membrane</keyword>
<keyword id="KW-0325">Glycoprotein</keyword>
<keyword id="KW-1032">Host cell membrane</keyword>
<keyword id="KW-1043">Host membrane</keyword>
<keyword id="KW-0945">Host-virus interaction</keyword>
<keyword id="KW-0449">Lipoprotein</keyword>
<keyword id="KW-0472">Membrane</keyword>
<keyword id="KW-0564">Palmitate</keyword>
<keyword id="KW-0732">Signal</keyword>
<keyword id="KW-0812">Transmembrane</keyword>
<keyword id="KW-1133">Transmembrane helix</keyword>
<keyword id="KW-1161">Viral attachment to host cell</keyword>
<keyword id="KW-0261">Viral envelope protein</keyword>
<keyword id="KW-1162">Viral penetration into host cytoplasm</keyword>
<keyword id="KW-0946">Virion</keyword>
<keyword id="KW-0843">Virulence</keyword>
<keyword id="KW-1160">Virus entry into host cell</keyword>
<name>SPIKE_BCHK3</name>
<protein>
    <recommendedName>
        <fullName evidence="1">Spike glycoprotein</fullName>
        <shortName evidence="1">S glycoprotein</shortName>
    </recommendedName>
    <alternativeName>
        <fullName evidence="1">E2</fullName>
    </alternativeName>
    <alternativeName>
        <fullName evidence="1">Peplomer protein</fullName>
    </alternativeName>
    <component>
        <recommendedName>
            <fullName evidence="1">Spike protein S1</fullName>
        </recommendedName>
    </component>
    <component>
        <recommendedName>
            <fullName evidence="1">Spike protein S2</fullName>
        </recommendedName>
    </component>
    <component>
        <recommendedName>
            <fullName evidence="1">Spike protein S2'</fullName>
        </recommendedName>
    </component>
</protein>
<dbReference type="EMBL" id="DQ022305">
    <property type="protein sequence ID" value="AAY88866.1"/>
    <property type="molecule type" value="Genomic_RNA"/>
</dbReference>
<dbReference type="BMRB" id="Q3LZX1"/>
<dbReference type="SMR" id="Q3LZX1"/>
<dbReference type="GlyCosmos" id="Q3LZX1">
    <property type="glycosylation" value="22 sites, No reported glycans"/>
</dbReference>
<dbReference type="Proteomes" id="UP000007450">
    <property type="component" value="Segment"/>
</dbReference>
<dbReference type="GO" id="GO:0044173">
    <property type="term" value="C:host cell endoplasmic reticulum-Golgi intermediate compartment membrane"/>
    <property type="evidence" value="ECO:0007669"/>
    <property type="project" value="UniProtKB-SubCell"/>
</dbReference>
<dbReference type="GO" id="GO:0020002">
    <property type="term" value="C:host cell plasma membrane"/>
    <property type="evidence" value="ECO:0007669"/>
    <property type="project" value="UniProtKB-SubCell"/>
</dbReference>
<dbReference type="GO" id="GO:0016020">
    <property type="term" value="C:membrane"/>
    <property type="evidence" value="ECO:0007669"/>
    <property type="project" value="UniProtKB-UniRule"/>
</dbReference>
<dbReference type="GO" id="GO:0019031">
    <property type="term" value="C:viral envelope"/>
    <property type="evidence" value="ECO:0007669"/>
    <property type="project" value="UniProtKB-UniRule"/>
</dbReference>
<dbReference type="GO" id="GO:0055036">
    <property type="term" value="C:virion membrane"/>
    <property type="evidence" value="ECO:0007669"/>
    <property type="project" value="UniProtKB-SubCell"/>
</dbReference>
<dbReference type="GO" id="GO:0075509">
    <property type="term" value="P:endocytosis involved in viral entry into host cell"/>
    <property type="evidence" value="ECO:0007669"/>
    <property type="project" value="UniProtKB-UniRule"/>
</dbReference>
<dbReference type="GO" id="GO:0039654">
    <property type="term" value="P:fusion of virus membrane with host endosome membrane"/>
    <property type="evidence" value="ECO:0007669"/>
    <property type="project" value="UniProtKB-UniRule"/>
</dbReference>
<dbReference type="GO" id="GO:0019064">
    <property type="term" value="P:fusion of virus membrane with host plasma membrane"/>
    <property type="evidence" value="ECO:0007669"/>
    <property type="project" value="UniProtKB-UniRule"/>
</dbReference>
<dbReference type="GO" id="GO:0046813">
    <property type="term" value="P:receptor-mediated virion attachment to host cell"/>
    <property type="evidence" value="ECO:0007669"/>
    <property type="project" value="UniProtKB-UniRule"/>
</dbReference>
<dbReference type="CDD" id="cd21624">
    <property type="entry name" value="SARS-CoV-like_Spike_S1_NTD"/>
    <property type="match status" value="1"/>
</dbReference>
<dbReference type="CDD" id="cd21477">
    <property type="entry name" value="SARS-CoV-like_Spike_S1_RBD"/>
    <property type="match status" value="1"/>
</dbReference>
<dbReference type="CDD" id="cd22378">
    <property type="entry name" value="SARS-CoV-like_Spike_SD1-2_S1-S2_S2"/>
    <property type="match status" value="1"/>
</dbReference>
<dbReference type="FunFam" id="1.20.5.300:FF:000003">
    <property type="entry name" value="Spike glycoprotein"/>
    <property type="match status" value="1"/>
</dbReference>
<dbReference type="Gene3D" id="1.20.5.300">
    <property type="match status" value="1"/>
</dbReference>
<dbReference type="Gene3D" id="3.30.70.1840">
    <property type="match status" value="2"/>
</dbReference>
<dbReference type="Gene3D" id="1.20.5.790">
    <property type="entry name" value="Single helix bin"/>
    <property type="match status" value="1"/>
</dbReference>
<dbReference type="Gene3D" id="2.60.120.960">
    <property type="entry name" value="Spike glycoprotein, N-terminal domain"/>
    <property type="match status" value="1"/>
</dbReference>
<dbReference type="HAMAP" id="MF_04099">
    <property type="entry name" value="BETA_CORONA_SPIKE"/>
    <property type="match status" value="1"/>
</dbReference>
<dbReference type="InterPro" id="IPR032500">
    <property type="entry name" value="bCoV_S1_N"/>
</dbReference>
<dbReference type="InterPro" id="IPR042578">
    <property type="entry name" value="BETA_CORONA_SPIKE"/>
</dbReference>
<dbReference type="InterPro" id="IPR043473">
    <property type="entry name" value="S2_sf_CoV"/>
</dbReference>
<dbReference type="InterPro" id="IPR043002">
    <property type="entry name" value="Spike_N_sf"/>
</dbReference>
<dbReference type="InterPro" id="IPR044341">
    <property type="entry name" value="Spike_S1_N_SARS-CoV-like"/>
</dbReference>
<dbReference type="InterPro" id="IPR018548">
    <property type="entry name" value="Spike_S1_RBD_bCoV"/>
</dbReference>
<dbReference type="InterPro" id="IPR036326">
    <property type="entry name" value="Spike_S1_RBD_sf_bCoV"/>
</dbReference>
<dbReference type="InterPro" id="IPR002552">
    <property type="entry name" value="Spike_S2_CoV"/>
</dbReference>
<dbReference type="InterPro" id="IPR044873">
    <property type="entry name" value="Spike_S2_CoV_HR1"/>
</dbReference>
<dbReference type="InterPro" id="IPR044874">
    <property type="entry name" value="Spike_S2_CoV_HR2"/>
</dbReference>
<dbReference type="Pfam" id="PF16451">
    <property type="entry name" value="bCoV_S1_N"/>
    <property type="match status" value="1"/>
</dbReference>
<dbReference type="Pfam" id="PF09408">
    <property type="entry name" value="bCoV_S1_RBD"/>
    <property type="match status" value="1"/>
</dbReference>
<dbReference type="Pfam" id="PF01601">
    <property type="entry name" value="CoV_S2"/>
    <property type="match status" value="1"/>
</dbReference>
<dbReference type="SUPFAM" id="SSF111474">
    <property type="entry name" value="Coronavirus S2 glycoprotein"/>
    <property type="match status" value="2"/>
</dbReference>
<dbReference type="SUPFAM" id="SSF143587">
    <property type="entry name" value="SARS receptor-binding domain-like"/>
    <property type="match status" value="1"/>
</dbReference>
<dbReference type="PROSITE" id="PS51921">
    <property type="entry name" value="BCOV_S1_CTD"/>
    <property type="match status" value="1"/>
</dbReference>
<dbReference type="PROSITE" id="PS51922">
    <property type="entry name" value="BCOV_S1_NTD"/>
    <property type="match status" value="1"/>
</dbReference>
<dbReference type="PROSITE" id="PS51923">
    <property type="entry name" value="COV_S2_HR1"/>
    <property type="match status" value="1"/>
</dbReference>
<dbReference type="PROSITE" id="PS51924">
    <property type="entry name" value="COV_S2_HR2"/>
    <property type="match status" value="1"/>
</dbReference>